<comment type="function">
    <text evidence="3 4 5 9">Staphylococcal enterotoxin that activates the host immune system by binding as unprocessed molecules to major histocompatibility (MHC) complex class II and T-cell receptor (TCR) molecules (PubMed:12467569, PubMed:2658055). In turn, waves of cellular activation, cytokine production, and migration into the lung tissue and airways occur via alphabeta T-cells (PubMed:23321986). Also causes the intoxication staphylococcal food poisoning syndrome. The illness is characterized by high fever, hypotension, diarrhea, shock, and in some cases death (Probable).</text>
</comment>
<comment type="cofactor">
    <cofactor>
        <name>Zn(2+)</name>
        <dbReference type="ChEBI" id="CHEBI:29105"/>
    </cofactor>
    <text>Binds 1 zinc ion per subunit. The zinc ion is necessary for the toxin interaction with MHC class II.</text>
</comment>
<comment type="subunit">
    <text evidence="2 3 5 6">Monomer. Interacts with MHC class II molecules alpha/HLA-DRB1 and beta/HLA-DRA chains (PubMed:11847286, PubMed:12467569, PubMed:2658055). The interaction with MHC-II molecules occurs at both zinc-dependent and zinc-independent sites (PubMed:12467569, PubMed:2658055). Interacts with T-cell receptor beta variable 7-9/TRBV7-9 (PubMed:27180909).</text>
</comment>
<comment type="subcellular location">
    <subcellularLocation>
        <location>Secreted</location>
    </subcellularLocation>
</comment>
<comment type="miscellaneous">
    <text>This toxin seems to be coded by a bacteriophage.</text>
</comment>
<comment type="similarity">
    <text evidence="8">Belongs to the staphylococcal/streptococcal toxin family.</text>
</comment>
<keyword id="KW-0002">3D-structure</keyword>
<keyword id="KW-0903">Direct protein sequencing</keyword>
<keyword id="KW-1015">Disulfide bond</keyword>
<keyword id="KW-0260">Enterotoxin</keyword>
<keyword id="KW-0479">Metal-binding</keyword>
<keyword id="KW-0964">Secreted</keyword>
<keyword id="KW-0732">Signal</keyword>
<keyword id="KW-0766">Superantigen</keyword>
<keyword id="KW-0800">Toxin</keyword>
<keyword id="KW-0862">Zinc</keyword>
<gene>
    <name type="primary">entA</name>
</gene>
<evidence type="ECO:0000269" key="1">
    <source>
    </source>
</evidence>
<evidence type="ECO:0000269" key="2">
    <source>
    </source>
</evidence>
<evidence type="ECO:0000269" key="3">
    <source>
    </source>
</evidence>
<evidence type="ECO:0000269" key="4">
    <source>
    </source>
</evidence>
<evidence type="ECO:0000269" key="5">
    <source>
    </source>
</evidence>
<evidence type="ECO:0000269" key="6">
    <source>
    </source>
</evidence>
<evidence type="ECO:0000269" key="7">
    <source>
    </source>
</evidence>
<evidence type="ECO:0000305" key="8"/>
<evidence type="ECO:0000305" key="9">
    <source>
    </source>
</evidence>
<evidence type="ECO:0007744" key="10">
    <source>
        <dbReference type="PDB" id="1DYQ"/>
    </source>
</evidence>
<evidence type="ECO:0007744" key="11">
    <source>
        <dbReference type="PDB" id="1I4G"/>
    </source>
</evidence>
<evidence type="ECO:0007744" key="12">
    <source>
        <dbReference type="PDB" id="1I4H"/>
    </source>
</evidence>
<evidence type="ECO:0007744" key="13">
    <source>
        <dbReference type="PDB" id="1LO5"/>
    </source>
</evidence>
<evidence type="ECO:0007744" key="14">
    <source>
        <dbReference type="PDB" id="5FK9"/>
    </source>
</evidence>
<evidence type="ECO:0007829" key="15">
    <source>
        <dbReference type="PDB" id="1DYQ"/>
    </source>
</evidence>
<evidence type="ECO:0007829" key="16">
    <source>
        <dbReference type="PDB" id="1ESF"/>
    </source>
</evidence>
<evidence type="ECO:0007829" key="17">
    <source>
        <dbReference type="PDB" id="1SXT"/>
    </source>
</evidence>
<evidence type="ECO:0007829" key="18">
    <source>
        <dbReference type="PDB" id="5FK9"/>
    </source>
</evidence>
<reference key="1">
    <citation type="journal article" date="1988" name="J. Bacteriol.">
        <title>Nucleotide sequence of the type A staphylococcal enterotoxin gene.</title>
        <authorList>
            <person name="Betley M.J."/>
            <person name="Mekalanos J.J."/>
        </authorList>
    </citation>
    <scope>NUCLEOTIDE SEQUENCE [GENOMIC DNA]</scope>
    <source>
        <strain>FRI337</strain>
    </source>
</reference>
<reference key="2">
    <citation type="journal article" date="1987" name="J. Biol. Chem.">
        <title>Complete amino acid sequence of staphylococcal enterotoxin A.</title>
        <authorList>
            <person name="Huang I.-Y."/>
            <person name="Hughes J.L."/>
            <person name="Bergdoll M.S."/>
            <person name="Schantz E.J."/>
        </authorList>
    </citation>
    <scope>PROTEIN SEQUENCE OF 25-257</scope>
</reference>
<reference key="3">
    <citation type="journal article" date="1989" name="Science">
        <title>Class II MHC molecules are specific receptors for staphylococcus enterotoxin A.</title>
        <authorList>
            <person name="Mollick J.A."/>
            <person name="Cook R.G."/>
            <person name="Rich R.R."/>
        </authorList>
    </citation>
    <scope>FUNCTION</scope>
    <scope>INTERACTION WITH MHC CLASS II ANTIGEN DR1/HLA-DRB1 AND HLA-DRA</scope>
</reference>
<reference key="4">
    <citation type="journal article" date="2010" name="Toxins">
        <title>Food poisoning and Staphylococcus aureus enterotoxins.</title>
        <authorList>
            <person name="Argudin M.A."/>
            <person name="Mendoza M.C."/>
            <person name="Rodicio M.R."/>
        </authorList>
    </citation>
    <scope>REVIEW ON FUNCTION</scope>
</reference>
<reference key="5">
    <citation type="journal article" date="2013" name="Mucosal Immunol.">
        <title>Rapid alphabeta T-cell responses orchestrate innate immunity in response to Staphylococcal enterotoxin A.</title>
        <authorList>
            <person name="Kumar S."/>
            <person name="Colpitts S.L."/>
            <person name="Menoret A."/>
            <person name="Budelsky A.L."/>
            <person name="Lefrancois L."/>
            <person name="Vella A.T."/>
        </authorList>
    </citation>
    <scope>FUNCTION</scope>
</reference>
<reference key="6">
    <citation type="journal article" date="1995" name="EMBO J.">
        <title>Crystal structure of the superantigen staphylococcal enterotoxin type A.</title>
        <authorList>
            <person name="Schad E.M."/>
            <person name="Zaitseva I."/>
            <person name="Zaitsev V.N."/>
            <person name="Dohlsten M."/>
            <person name="Kalland T."/>
            <person name="Schlievert P.M."/>
            <person name="Ohlendorf D.H."/>
            <person name="Svensson L.A."/>
        </authorList>
    </citation>
    <scope>X-RAY CRYSTALLOGRAPHY (1.9 ANGSTROMS)</scope>
</reference>
<reference key="7">
    <citation type="journal article" date="1996" name="J. Biol. Chem.">
        <title>The Co-crystal structure of staphylococcal enterotoxin type A with Zn2+ at 2.7-A resolution. Implications for major histocompatibility complex class II binding.</title>
        <authorList>
            <person name="Sundstroem M."/>
            <person name="Hallen D."/>
            <person name="Svensson A."/>
            <person name="Schad E."/>
            <person name="Dohlsten M."/>
            <person name="Abrahmsen L."/>
        </authorList>
    </citation>
    <scope>X-RAY CRYSTALLOGRAPHY (2.7 ANGSTROMS) IN COMPLEX WITH ZINC</scope>
</reference>
<reference key="8">
    <citation type="journal article" date="1995" name="Nat. Struct. Biol.">
        <title>Residues defining V beta specificity in staphylococcal enterotoxins.</title>
        <authorList>
            <person name="Swaminathan S."/>
            <person name="Furey W.F. Jr."/>
            <person name="Pletcher J."/>
            <person name="Sax M."/>
        </authorList>
    </citation>
    <scope>3D-STRUCTURE MODELING</scope>
</reference>
<reference key="9">
    <citation type="journal article" date="1997" name="J. Mol. Biol.">
        <title>A structural and functional comparison of staphylococcal enterotoxins A and C2 reveals remarkable similarity and dissimilarity.</title>
        <authorList>
            <person name="Schad E.M."/>
            <person name="Papageorgiou A.C."/>
            <person name="Svensson L.A."/>
            <person name="Acharya K.R."/>
        </authorList>
    </citation>
    <scope>COMPARISON OF STRUCTURE OF SEA AND SEC2</scope>
</reference>
<reference evidence="11 12" key="10">
    <citation type="journal article" date="2001" name="J. Biol. Inorg. Chem.">
        <title>Cooperative zinc binding in a staphylococcal enterotoxin A mutant mimics the SEA-MHC class II interaction.</title>
        <authorList>
            <person name="Haakansson M."/>
            <person name="Antonsson P."/>
            <person name="Bjoerk P."/>
            <person name="Svensson L.A."/>
        </authorList>
    </citation>
    <scope>X-RAY CRYSTALLOGRAPHY (2.10 ANGSTROMS) IN COMPLEX WITH ZINC</scope>
    <scope>MUTAGENESIS OF HIS-211</scope>
</reference>
<reference evidence="10" key="11">
    <citation type="journal article" date="2002" name="Protein Sci.">
        <title>Structural basis for abrogated binding between staphylococcal enterotoxin A superantigen vaccine and MHC-IIalpha.</title>
        <authorList>
            <person name="Krupka H.I."/>
            <person name="Segelke B.W."/>
            <person name="Ulrich R.G."/>
            <person name="Ringhofer S."/>
            <person name="Knapp M."/>
            <person name="Rupp B."/>
        </authorList>
    </citation>
    <scope>X-RAY CRYSTALLOGRAPHY (1.50 ANGSTROMS) IN COMPLEX WITH ZINC</scope>
    <scope>INTERACTION WITH MHC CLASS II ANTIGEN DR1/HLA-DRB1 AND HLA-DRA</scope>
</reference>
<reference evidence="13" key="12">
    <citation type="journal article" date="2002" name="Structure">
        <title>Crystal structure of a SEA variant in complex with MHC class II reveals the ability of SEA to crosslink MHC molecules.</title>
        <authorList>
            <person name="Petersson K."/>
            <person name="Thunnissen M."/>
            <person name="Forsberg G."/>
            <person name="Walse B."/>
        </authorList>
    </citation>
    <scope>X-RAY CRYSTALLOGRAPHY (3.20 ANGSTROMS)</scope>
    <scope>MUTAGENESIS OF ASP-251</scope>
    <scope>INTERACTION WITH HOST HLA-DRA</scope>
    <scope>FUNCTION</scope>
</reference>
<reference evidence="14" key="13">
    <citation type="journal article" date="2016" name="Sci. Rep.">
        <title>Two common structural motifs for TCR recognition by staphylococcal enterotoxins.</title>
        <authorList>
            <person name="Rodstrom K.E."/>
            <person name="Regenthal P."/>
            <person name="Bahl C."/>
            <person name="Ford A."/>
            <person name="Baker D."/>
            <person name="Lindkvist-Petersson K."/>
        </authorList>
    </citation>
    <scope>X-RAY CRYSTALLOGRAPHY (3.10 ANGSTROMS)</scope>
    <scope>FUNCTION</scope>
    <scope>INTERACTION WITH HOST T CELL RECEPTOR BETA VARIABLE 7-9/TRBV7-9</scope>
    <scope>DISULFIDE BOND</scope>
</reference>
<feature type="signal peptide" evidence="7">
    <location>
        <begin position="1"/>
        <end position="24"/>
    </location>
</feature>
<feature type="chain" id="PRO_0000035604" description="Enterotoxin type A">
    <location>
        <begin position="25"/>
        <end position="257"/>
    </location>
</feature>
<feature type="binding site" evidence="2 10">
    <location>
        <position position="211"/>
    </location>
    <ligand>
        <name>Zn(2+)</name>
        <dbReference type="ChEBI" id="CHEBI:29105"/>
    </ligand>
</feature>
<feature type="binding site" evidence="1 2 10 11 12">
    <location>
        <position position="249"/>
    </location>
    <ligand>
        <name>Zn(2+)</name>
        <dbReference type="ChEBI" id="CHEBI:29105"/>
    </ligand>
</feature>
<feature type="binding site" evidence="1 2 10 11 12">
    <location>
        <position position="251"/>
    </location>
    <ligand>
        <name>Zn(2+)</name>
        <dbReference type="ChEBI" id="CHEBI:29105"/>
    </ligand>
</feature>
<feature type="disulfide bond" evidence="6 14">
    <location>
        <begin position="120"/>
        <end position="130"/>
    </location>
</feature>
<feature type="mutagenesis site" description="Almost 10-fold reduction of the binding to major histocompatibility complex (MHC) class II." evidence="1">
    <original>H</original>
    <variation>A</variation>
    <location>
        <position position="211"/>
    </location>
</feature>
<feature type="mutagenesis site" description="Loss of interaction with the beta chain of HLA-DR1 through the zinc-dependent site." evidence="3">
    <original>D</original>
    <variation>A</variation>
    <location>
        <position position="251"/>
    </location>
</feature>
<feature type="sequence conflict" description="In Ref. 2; AA sequence." evidence="8" ref="2">
    <original>T</original>
    <variation>S</variation>
    <location>
        <position position="242"/>
    </location>
</feature>
<feature type="helix" evidence="16">
    <location>
        <begin position="28"/>
        <end position="31"/>
    </location>
</feature>
<feature type="helix" evidence="15">
    <location>
        <begin position="33"/>
        <end position="35"/>
    </location>
</feature>
<feature type="helix" evidence="15">
    <location>
        <begin position="39"/>
        <end position="41"/>
    </location>
</feature>
<feature type="turn" evidence="18">
    <location>
        <begin position="43"/>
        <end position="45"/>
    </location>
</feature>
<feature type="helix" evidence="15">
    <location>
        <begin position="46"/>
        <end position="55"/>
    </location>
</feature>
<feature type="strand" evidence="15">
    <location>
        <begin position="59"/>
        <end position="65"/>
    </location>
</feature>
<feature type="strand" evidence="15">
    <location>
        <begin position="72"/>
        <end position="78"/>
    </location>
</feature>
<feature type="strand" evidence="17">
    <location>
        <begin position="84"/>
        <end position="87"/>
    </location>
</feature>
<feature type="strand" evidence="15">
    <location>
        <begin position="89"/>
        <end position="94"/>
    </location>
</feature>
<feature type="helix" evidence="15">
    <location>
        <begin position="98"/>
        <end position="104"/>
    </location>
</feature>
<feature type="strand" evidence="15">
    <location>
        <begin position="109"/>
        <end position="114"/>
    </location>
</feature>
<feature type="helix" evidence="15">
    <location>
        <begin position="117"/>
        <end position="119"/>
    </location>
</feature>
<feature type="strand" evidence="16">
    <location>
        <begin position="122"/>
        <end position="124"/>
    </location>
</feature>
<feature type="helix" evidence="17">
    <location>
        <begin position="125"/>
        <end position="127"/>
    </location>
</feature>
<feature type="strand" evidence="15">
    <location>
        <begin position="128"/>
        <end position="133"/>
    </location>
</feature>
<feature type="strand" evidence="15">
    <location>
        <begin position="135"/>
        <end position="137"/>
    </location>
</feature>
<feature type="turn" evidence="17">
    <location>
        <begin position="139"/>
        <end position="141"/>
    </location>
</feature>
<feature type="strand" evidence="15">
    <location>
        <begin position="142"/>
        <end position="148"/>
    </location>
</feature>
<feature type="strand" evidence="15">
    <location>
        <begin position="151"/>
        <end position="155"/>
    </location>
</feature>
<feature type="strand" evidence="15">
    <location>
        <begin position="158"/>
        <end position="160"/>
    </location>
</feature>
<feature type="strand" evidence="15">
    <location>
        <begin position="166"/>
        <end position="175"/>
    </location>
</feature>
<feature type="helix" evidence="15">
    <location>
        <begin position="176"/>
        <end position="191"/>
    </location>
</feature>
<feature type="strand" evidence="18">
    <location>
        <begin position="193"/>
        <end position="195"/>
    </location>
</feature>
<feature type="helix" evidence="15">
    <location>
        <begin position="197"/>
        <end position="199"/>
    </location>
</feature>
<feature type="strand" evidence="15">
    <location>
        <begin position="205"/>
        <end position="211"/>
    </location>
</feature>
<feature type="strand" evidence="15">
    <location>
        <begin position="213"/>
        <end position="215"/>
    </location>
</feature>
<feature type="strand" evidence="15">
    <location>
        <begin position="218"/>
        <end position="221"/>
    </location>
</feature>
<feature type="strand" evidence="16">
    <location>
        <begin position="227"/>
        <end position="229"/>
    </location>
</feature>
<feature type="turn" evidence="15">
    <location>
        <begin position="230"/>
        <end position="232"/>
    </location>
</feature>
<feature type="helix" evidence="15">
    <location>
        <begin position="233"/>
        <end position="237"/>
    </location>
</feature>
<feature type="strand" evidence="15">
    <location>
        <begin position="242"/>
        <end position="244"/>
    </location>
</feature>
<feature type="strand" evidence="15">
    <location>
        <begin position="249"/>
        <end position="255"/>
    </location>
</feature>
<name>ETXA_STAAU</name>
<proteinExistence type="evidence at protein level"/>
<sequence length="257" mass="29669">MKKTAFTLLLFIALTLTTSPLVNGSEKSEEINEKDLRKKSELQGTALGNLKQIYYYNEKAKTENKESHDQFLQHTILFKGFFTDHSWYNDLLVDFDSKDIVDKYKGKKVDLYGAYYGYQCAGGTPNKTACMYGGVTLHDNNRLTEEKKVPINLWLDGKQNTVPLETVKTNKKNVTVQELDLQARRYLQEKYNLYNSDVFDGKVQRGLIVFHTSTEPSVNYDLFGAQGQYSNTLLRIYRDNKTINSENMHIDIYLYTS</sequence>
<accession>P0A0L2</accession>
<accession>P13163</accession>
<dbReference type="EMBL" id="M18970">
    <property type="protein sequence ID" value="AAA26681.1"/>
    <property type="molecule type" value="Genomic_DNA"/>
</dbReference>
<dbReference type="PIR" id="A28664">
    <property type="entry name" value="A28664"/>
</dbReference>
<dbReference type="PDB" id="1DYQ">
    <property type="method" value="X-ray"/>
    <property type="resolution" value="1.50 A"/>
    <property type="chains" value="A=25-257"/>
</dbReference>
<dbReference type="PDB" id="1ESF">
    <property type="method" value="X-ray"/>
    <property type="resolution" value="1.90 A"/>
    <property type="chains" value="A/B=25-257"/>
</dbReference>
<dbReference type="PDB" id="1I4G">
    <property type="method" value="X-ray"/>
    <property type="resolution" value="2.10 A"/>
    <property type="chains" value="A/B=25-257"/>
</dbReference>
<dbReference type="PDB" id="1I4H">
    <property type="method" value="X-ray"/>
    <property type="resolution" value="2.90 A"/>
    <property type="chains" value="A/B=25-257"/>
</dbReference>
<dbReference type="PDB" id="1LO5">
    <property type="method" value="X-ray"/>
    <property type="resolution" value="3.20 A"/>
    <property type="chains" value="D=25-257"/>
</dbReference>
<dbReference type="PDB" id="1SXT">
    <property type="method" value="X-ray"/>
    <property type="resolution" value="2.70 A"/>
    <property type="chains" value="A/B=25-257"/>
</dbReference>
<dbReference type="PDB" id="5FK9">
    <property type="method" value="X-ray"/>
    <property type="resolution" value="3.10 A"/>
    <property type="chains" value="C=25-257"/>
</dbReference>
<dbReference type="PDBsum" id="1DYQ"/>
<dbReference type="PDBsum" id="1ESF"/>
<dbReference type="PDBsum" id="1I4G"/>
<dbReference type="PDBsum" id="1I4H"/>
<dbReference type="PDBsum" id="1LO5"/>
<dbReference type="PDBsum" id="1SXT"/>
<dbReference type="PDBsum" id="5FK9"/>
<dbReference type="SMR" id="P0A0L2"/>
<dbReference type="DIP" id="DIP-58974N"/>
<dbReference type="IntAct" id="P0A0L2">
    <property type="interactions" value="1"/>
</dbReference>
<dbReference type="Allergome" id="2139">
    <property type="allergen name" value="Sta a SEA"/>
</dbReference>
<dbReference type="ABCD" id="P0A0L2">
    <property type="antibodies" value="16 sequenced antibodies"/>
</dbReference>
<dbReference type="OMA" id="NGNKHES"/>
<dbReference type="EvolutionaryTrace" id="P0A0L2"/>
<dbReference type="PRO" id="PR:P0A0L2"/>
<dbReference type="GO" id="GO:0005576">
    <property type="term" value="C:extracellular region"/>
    <property type="evidence" value="ECO:0007669"/>
    <property type="project" value="UniProtKB-SubCell"/>
</dbReference>
<dbReference type="GO" id="GO:0046872">
    <property type="term" value="F:metal ion binding"/>
    <property type="evidence" value="ECO:0007669"/>
    <property type="project" value="UniProtKB-KW"/>
</dbReference>
<dbReference type="GO" id="GO:0042289">
    <property type="term" value="F:MHC class II protein binding"/>
    <property type="evidence" value="ECO:0000353"/>
    <property type="project" value="BHF-UCL"/>
</dbReference>
<dbReference type="GO" id="GO:0090729">
    <property type="term" value="F:toxin activity"/>
    <property type="evidence" value="ECO:0000314"/>
    <property type="project" value="UniProtKB"/>
</dbReference>
<dbReference type="Gene3D" id="2.40.50.110">
    <property type="match status" value="1"/>
</dbReference>
<dbReference type="Gene3D" id="3.10.20.120">
    <property type="match status" value="1"/>
</dbReference>
<dbReference type="InterPro" id="IPR008992">
    <property type="entry name" value="Enterotoxin"/>
</dbReference>
<dbReference type="InterPro" id="IPR006126">
    <property type="entry name" value="Staph/Strept_toxin_CS"/>
</dbReference>
<dbReference type="InterPro" id="IPR006173">
    <property type="entry name" value="Staph_tox_OB"/>
</dbReference>
<dbReference type="InterPro" id="IPR016091">
    <property type="entry name" value="SuperAg_toxin_C"/>
</dbReference>
<dbReference type="InterPro" id="IPR013307">
    <property type="entry name" value="Superantigen_bac"/>
</dbReference>
<dbReference type="InterPro" id="IPR006123">
    <property type="entry name" value="Toxin_b-grasp_Staph/Strep"/>
</dbReference>
<dbReference type="InterPro" id="IPR006177">
    <property type="entry name" value="Toxin_bac"/>
</dbReference>
<dbReference type="Pfam" id="PF02876">
    <property type="entry name" value="Stap_Strp_tox_C"/>
    <property type="match status" value="1"/>
</dbReference>
<dbReference type="Pfam" id="PF01123">
    <property type="entry name" value="Stap_Strp_toxin"/>
    <property type="match status" value="1"/>
</dbReference>
<dbReference type="PRINTS" id="PR00279">
    <property type="entry name" value="BACTRLTOXIN"/>
</dbReference>
<dbReference type="PRINTS" id="PR01898">
    <property type="entry name" value="SAGSUPRFAMLY"/>
</dbReference>
<dbReference type="SUPFAM" id="SSF50203">
    <property type="entry name" value="Bacterial enterotoxins"/>
    <property type="match status" value="1"/>
</dbReference>
<dbReference type="SUPFAM" id="SSF54334">
    <property type="entry name" value="Superantigen toxins, C-terminal domain"/>
    <property type="match status" value="1"/>
</dbReference>
<dbReference type="PROSITE" id="PS00277">
    <property type="entry name" value="STAPH_STREP_TOXIN_1"/>
    <property type="match status" value="1"/>
</dbReference>
<dbReference type="PROSITE" id="PS00278">
    <property type="entry name" value="STAPH_STREP_TOXIN_2"/>
    <property type="match status" value="1"/>
</dbReference>
<protein>
    <recommendedName>
        <fullName>Enterotoxin type A</fullName>
    </recommendedName>
    <alternativeName>
        <fullName>SEA</fullName>
    </alternativeName>
</protein>
<organism>
    <name type="scientific">Staphylococcus aureus</name>
    <dbReference type="NCBI Taxonomy" id="1280"/>
    <lineage>
        <taxon>Bacteria</taxon>
        <taxon>Bacillati</taxon>
        <taxon>Bacillota</taxon>
        <taxon>Bacilli</taxon>
        <taxon>Bacillales</taxon>
        <taxon>Staphylococcaceae</taxon>
        <taxon>Staphylococcus</taxon>
    </lineage>
</organism>